<accession>Q0W389</accession>
<organism>
    <name type="scientific">Methanocella arvoryzae (strain DSM 22066 / NBRC 105507 / MRE50)</name>
    <dbReference type="NCBI Taxonomy" id="351160"/>
    <lineage>
        <taxon>Archaea</taxon>
        <taxon>Methanobacteriati</taxon>
        <taxon>Methanobacteriota</taxon>
        <taxon>Stenosarchaea group</taxon>
        <taxon>Methanomicrobia</taxon>
        <taxon>Methanocellales</taxon>
        <taxon>Methanocellaceae</taxon>
        <taxon>Methanocella</taxon>
    </lineage>
</organism>
<evidence type="ECO:0000255" key="1">
    <source>
        <dbReference type="HAMAP-Rule" id="MF_00448"/>
    </source>
</evidence>
<evidence type="ECO:0000305" key="2"/>
<protein>
    <recommendedName>
        <fullName evidence="1">Large ribosomal subunit protein uL16</fullName>
    </recommendedName>
    <alternativeName>
        <fullName evidence="2">50S ribosomal protein L10e</fullName>
    </alternativeName>
</protein>
<comment type="similarity">
    <text evidence="1">Belongs to the universal ribosomal protein uL16 family.</text>
</comment>
<dbReference type="EMBL" id="AM114193">
    <property type="protein sequence ID" value="CAJ37154.1"/>
    <property type="molecule type" value="Genomic_DNA"/>
</dbReference>
<dbReference type="RefSeq" id="WP_012035420.1">
    <property type="nucleotide sequence ID" value="NC_009464.1"/>
</dbReference>
<dbReference type="SMR" id="Q0W389"/>
<dbReference type="STRING" id="351160.RCIX1996"/>
<dbReference type="GeneID" id="5145246"/>
<dbReference type="KEGG" id="rci:RCIX1996"/>
<dbReference type="PATRIC" id="fig|351160.9.peg.1128"/>
<dbReference type="eggNOG" id="arCOG04113">
    <property type="taxonomic scope" value="Archaea"/>
</dbReference>
<dbReference type="OrthoDB" id="30538at2157"/>
<dbReference type="Proteomes" id="UP000000663">
    <property type="component" value="Chromosome"/>
</dbReference>
<dbReference type="GO" id="GO:1990904">
    <property type="term" value="C:ribonucleoprotein complex"/>
    <property type="evidence" value="ECO:0007669"/>
    <property type="project" value="UniProtKB-KW"/>
</dbReference>
<dbReference type="GO" id="GO:0005840">
    <property type="term" value="C:ribosome"/>
    <property type="evidence" value="ECO:0007669"/>
    <property type="project" value="UniProtKB-KW"/>
</dbReference>
<dbReference type="GO" id="GO:0003735">
    <property type="term" value="F:structural constituent of ribosome"/>
    <property type="evidence" value="ECO:0007669"/>
    <property type="project" value="InterPro"/>
</dbReference>
<dbReference type="GO" id="GO:0006412">
    <property type="term" value="P:translation"/>
    <property type="evidence" value="ECO:0007669"/>
    <property type="project" value="UniProtKB-UniRule"/>
</dbReference>
<dbReference type="CDD" id="cd01433">
    <property type="entry name" value="Ribosomal_L16_L10e"/>
    <property type="match status" value="1"/>
</dbReference>
<dbReference type="Gene3D" id="3.90.1170.10">
    <property type="entry name" value="Ribosomal protein L10e/L16"/>
    <property type="match status" value="1"/>
</dbReference>
<dbReference type="HAMAP" id="MF_00448">
    <property type="entry name" value="Ribosomal_uL16_arch"/>
    <property type="match status" value="1"/>
</dbReference>
<dbReference type="InterPro" id="IPR047873">
    <property type="entry name" value="Ribosomal_uL16"/>
</dbReference>
<dbReference type="InterPro" id="IPR022981">
    <property type="entry name" value="Ribosomal_uL16_arc"/>
</dbReference>
<dbReference type="InterPro" id="IPR018255">
    <property type="entry name" value="Ribosomal_uL16_CS_euk_arc"/>
</dbReference>
<dbReference type="InterPro" id="IPR016180">
    <property type="entry name" value="Ribosomal_uL16_dom"/>
</dbReference>
<dbReference type="InterPro" id="IPR001197">
    <property type="entry name" value="Ribosomal_uL16_euk_arch"/>
</dbReference>
<dbReference type="InterPro" id="IPR036920">
    <property type="entry name" value="Ribosomal_uL16_sf"/>
</dbReference>
<dbReference type="NCBIfam" id="NF003238">
    <property type="entry name" value="PRK04199.1-3"/>
    <property type="match status" value="1"/>
</dbReference>
<dbReference type="NCBIfam" id="NF003239">
    <property type="entry name" value="PRK04199.1-4"/>
    <property type="match status" value="1"/>
</dbReference>
<dbReference type="NCBIfam" id="TIGR00279">
    <property type="entry name" value="uL16_euk_arch"/>
    <property type="match status" value="1"/>
</dbReference>
<dbReference type="PANTHER" id="PTHR11726">
    <property type="entry name" value="60S RIBOSOMAL PROTEIN L10"/>
    <property type="match status" value="1"/>
</dbReference>
<dbReference type="Pfam" id="PF00252">
    <property type="entry name" value="Ribosomal_L16"/>
    <property type="match status" value="1"/>
</dbReference>
<dbReference type="PIRSF" id="PIRSF005590">
    <property type="entry name" value="Ribosomal_L10"/>
    <property type="match status" value="1"/>
</dbReference>
<dbReference type="SUPFAM" id="SSF54686">
    <property type="entry name" value="Ribosomal protein L16p/L10e"/>
    <property type="match status" value="1"/>
</dbReference>
<dbReference type="PROSITE" id="PS01257">
    <property type="entry name" value="RIBOSOMAL_L10E"/>
    <property type="match status" value="1"/>
</dbReference>
<sequence>MARKPGRMYKKFSGPAYTRREYMGGVPGVKVAQFDMGNLTEELPIAVTLVVNETCQIRHDALEAARISANRYLLNDVGKTNYRFKVRVYPHQVLRENKQATGAGADRVSDGMRRAFGKAVGTAARVYEGQGVFTIWVNRANFEKAKEAMRRAGHKLPTPYRVVVEKGAELVK</sequence>
<feature type="chain" id="PRO_1000026199" description="Large ribosomal subunit protein uL16">
    <location>
        <begin position="1"/>
        <end position="172"/>
    </location>
</feature>
<gene>
    <name evidence="1" type="primary">rpl10e</name>
    <name type="ordered locus">UNCMA_10920</name>
    <name type="ORF">RCIX1996</name>
</gene>
<name>RL10E_METAR</name>
<reference key="1">
    <citation type="journal article" date="2006" name="Science">
        <title>Genome of rice cluster I archaea -- the key methane producers in the rice rhizosphere.</title>
        <authorList>
            <person name="Erkel C."/>
            <person name="Kube M."/>
            <person name="Reinhardt R."/>
            <person name="Liesack W."/>
        </authorList>
    </citation>
    <scope>NUCLEOTIDE SEQUENCE [LARGE SCALE GENOMIC DNA]</scope>
    <source>
        <strain>DSM 22066 / NBRC 105507 / MRE50</strain>
    </source>
</reference>
<keyword id="KW-1185">Reference proteome</keyword>
<keyword id="KW-0687">Ribonucleoprotein</keyword>
<keyword id="KW-0689">Ribosomal protein</keyword>
<proteinExistence type="inferred from homology"/>